<gene>
    <name evidence="1" type="primary">viaA</name>
    <name type="ordered locus">YPN_0004</name>
    <name type="ORF">YP516_4529</name>
</gene>
<comment type="function">
    <text evidence="1">Component of the RavA-ViaA chaperone complex, which may act on the membrane to optimize the function of some of the respiratory chains. ViaA stimulates the ATPase activity of RavA.</text>
</comment>
<comment type="subunit">
    <text evidence="1">Homodimer. Interacts with RavA.</text>
</comment>
<comment type="subcellular location">
    <subcellularLocation>
        <location evidence="1">Cytoplasm</location>
    </subcellularLocation>
</comment>
<comment type="similarity">
    <text evidence="1">Belongs to the ViaA family.</text>
</comment>
<protein>
    <recommendedName>
        <fullName evidence="1">Regulatory protein ViaA</fullName>
    </recommendedName>
    <alternativeName>
        <fullName evidence="1">VWA interacting with AAA+ ATPase</fullName>
    </alternativeName>
</protein>
<name>VIAA_YERPN</name>
<feature type="chain" id="PRO_1000069614" description="Regulatory protein ViaA">
    <location>
        <begin position="1"/>
        <end position="488"/>
    </location>
</feature>
<accession>Q1CNU3</accession>
<accession>D1Q316</accession>
<organism>
    <name type="scientific">Yersinia pestis bv. Antiqua (strain Nepal516)</name>
    <dbReference type="NCBI Taxonomy" id="377628"/>
    <lineage>
        <taxon>Bacteria</taxon>
        <taxon>Pseudomonadati</taxon>
        <taxon>Pseudomonadota</taxon>
        <taxon>Gammaproteobacteria</taxon>
        <taxon>Enterobacterales</taxon>
        <taxon>Yersiniaceae</taxon>
        <taxon>Yersinia</taxon>
    </lineage>
</organism>
<proteinExistence type="inferred from homology"/>
<reference key="1">
    <citation type="journal article" date="2006" name="J. Bacteriol.">
        <title>Complete genome sequence of Yersinia pestis strains Antiqua and Nepal516: evidence of gene reduction in an emerging pathogen.</title>
        <authorList>
            <person name="Chain P.S.G."/>
            <person name="Hu P."/>
            <person name="Malfatti S.A."/>
            <person name="Radnedge L."/>
            <person name="Larimer F."/>
            <person name="Vergez L.M."/>
            <person name="Worsham P."/>
            <person name="Chu M.C."/>
            <person name="Andersen G.L."/>
        </authorList>
    </citation>
    <scope>NUCLEOTIDE SEQUENCE [LARGE SCALE GENOMIC DNA]</scope>
    <source>
        <strain>Nepal516</strain>
    </source>
</reference>
<reference key="2">
    <citation type="submission" date="2009-04" db="EMBL/GenBank/DDBJ databases">
        <title>Yersinia pestis Nepal516A whole genome shotgun sequencing project.</title>
        <authorList>
            <person name="Plunkett G. III"/>
            <person name="Anderson B.D."/>
            <person name="Baumler D.J."/>
            <person name="Burland V."/>
            <person name="Cabot E.L."/>
            <person name="Glasner J.D."/>
            <person name="Mau B."/>
            <person name="Neeno-Eckwall E."/>
            <person name="Perna N.T."/>
            <person name="Munk A.C."/>
            <person name="Tapia R."/>
            <person name="Green L.D."/>
            <person name="Rogers Y.C."/>
            <person name="Detter J.C."/>
            <person name="Bruce D.C."/>
            <person name="Brettin T.S."/>
        </authorList>
    </citation>
    <scope>NUCLEOTIDE SEQUENCE [LARGE SCALE GENOMIC DNA]</scope>
    <source>
        <strain>Nepal516</strain>
    </source>
</reference>
<evidence type="ECO:0000255" key="1">
    <source>
        <dbReference type="HAMAP-Rule" id="MF_01626"/>
    </source>
</evidence>
<keyword id="KW-0143">Chaperone</keyword>
<keyword id="KW-0963">Cytoplasm</keyword>
<dbReference type="EMBL" id="CP000305">
    <property type="protein sequence ID" value="ABG16337.1"/>
    <property type="molecule type" value="Genomic_DNA"/>
</dbReference>
<dbReference type="EMBL" id="ACNQ01000019">
    <property type="protein sequence ID" value="EEO74919.1"/>
    <property type="molecule type" value="Genomic_DNA"/>
</dbReference>
<dbReference type="RefSeq" id="WP_002212255.1">
    <property type="nucleotide sequence ID" value="NZ_ACNQ01000019.1"/>
</dbReference>
<dbReference type="SMR" id="Q1CNU3"/>
<dbReference type="GeneID" id="57974590"/>
<dbReference type="KEGG" id="ypn:YPN_0004"/>
<dbReference type="HOGENOM" id="CLU_022130_0_0_6"/>
<dbReference type="Proteomes" id="UP000008936">
    <property type="component" value="Chromosome"/>
</dbReference>
<dbReference type="GO" id="GO:0005829">
    <property type="term" value="C:cytosol"/>
    <property type="evidence" value="ECO:0007669"/>
    <property type="project" value="TreeGrafter"/>
</dbReference>
<dbReference type="CDD" id="cd01462">
    <property type="entry name" value="VWA_YIEM_type"/>
    <property type="match status" value="1"/>
</dbReference>
<dbReference type="Gene3D" id="3.40.50.410">
    <property type="entry name" value="von Willebrand factor, type A domain"/>
    <property type="match status" value="1"/>
</dbReference>
<dbReference type="HAMAP" id="MF_01626">
    <property type="entry name" value="ViaA"/>
    <property type="match status" value="1"/>
</dbReference>
<dbReference type="InterPro" id="IPR008912">
    <property type="entry name" value="Uncharacterised_CoxE"/>
</dbReference>
<dbReference type="InterPro" id="IPR023481">
    <property type="entry name" value="Uncharacterised_ViaA"/>
</dbReference>
<dbReference type="InterPro" id="IPR002035">
    <property type="entry name" value="VWF_A"/>
</dbReference>
<dbReference type="InterPro" id="IPR036465">
    <property type="entry name" value="vWFA_dom_sf"/>
</dbReference>
<dbReference type="NCBIfam" id="NF008230">
    <property type="entry name" value="PRK10997.1"/>
    <property type="match status" value="1"/>
</dbReference>
<dbReference type="PANTHER" id="PTHR36846">
    <property type="entry name" value="PROTEIN VIAA"/>
    <property type="match status" value="1"/>
</dbReference>
<dbReference type="PANTHER" id="PTHR36846:SF1">
    <property type="entry name" value="PROTEIN VIAA"/>
    <property type="match status" value="1"/>
</dbReference>
<dbReference type="Pfam" id="PF05762">
    <property type="entry name" value="VWA_CoxE"/>
    <property type="match status" value="1"/>
</dbReference>
<dbReference type="SMART" id="SM00327">
    <property type="entry name" value="VWA"/>
    <property type="match status" value="1"/>
</dbReference>
<dbReference type="SUPFAM" id="SSF53300">
    <property type="entry name" value="vWA-like"/>
    <property type="match status" value="1"/>
</dbReference>
<sequence length="488" mass="56081">MLSLATLDMLLSISEGELIEEMVVGLLAAPQLAIFFEKFPRIKRALMKDIPGWKQNLQQRIREASVPPGLANEFSLYQQSLLEDSPQFYAHLPDIVAQLQDLHSPFATQAKTLVQTADLAKNPPGGDSLQTLFLQRWRVSLILQTITIHHQLLEQEREQLLAELQRRLALSGALEPILTTNDNAAGRLWDMSQGHLQRGDYQLLLQYGDFLQQQPELIRLAEQLGRSRSAKAQPAPDARYEPYTVMVRQPDSVPEEVSGIHQSNDILRLLPTELVMLGMSELEFEFYRRLLERRLLTYRLQGDNWQEKTQQRPVSLKQNDEQPRGPFIVCVDTSGSMGGFNEQCAKAFCLALLRIALADNRRCYIMLFATEIIHYELSADNGIEQAIRFLNQHFRGGTDLAACLANTLNKMEDREWYDADAVIISDFIAQRLPEELVRKIKIQQQAHQHRFHAVAMSAYGKPGIMRIFDHIWRFDTSLKSRLIRRWKR</sequence>